<sequence>MEEIKRLVLAMQFMTHLPIPIEIDVEKSEFYKIASYFPIVGIVIGGILSLFYIALKDFFSREIVMTFIVAFSYVLTGAMHIDGLADTFDGLFSNKDKSKMLEIMRDSRLGTNGVLALVFMVVLKILFLTNINENITLTALLITPIIGRLSIVFSMMITKSARGGEGLGGLMLGKVGIREFAIAFVISIATSYFILPLAVFVKILTISLFVTYIVSKYISLRIGGMTGDTLGAVNELAELTALICFVSVSL</sequence>
<feature type="chain" id="PRO_1000132611" description="Adenosylcobinamide-GDP ribazoletransferase">
    <location>
        <begin position="1"/>
        <end position="250"/>
    </location>
</feature>
<feature type="transmembrane region" description="Helical" evidence="1">
    <location>
        <begin position="33"/>
        <end position="53"/>
    </location>
</feature>
<feature type="transmembrane region" description="Helical" evidence="1">
    <location>
        <begin position="63"/>
        <end position="83"/>
    </location>
</feature>
<feature type="transmembrane region" description="Helical" evidence="1">
    <location>
        <begin position="109"/>
        <end position="129"/>
    </location>
</feature>
<feature type="transmembrane region" description="Helical" evidence="1">
    <location>
        <begin position="137"/>
        <end position="157"/>
    </location>
</feature>
<feature type="transmembrane region" description="Helical" evidence="1">
    <location>
        <begin position="180"/>
        <end position="200"/>
    </location>
</feature>
<feature type="transmembrane region" description="Helical" evidence="1">
    <location>
        <begin position="203"/>
        <end position="223"/>
    </location>
</feature>
<organism>
    <name type="scientific">Thermoanaerobacter sp. (strain X514)</name>
    <dbReference type="NCBI Taxonomy" id="399726"/>
    <lineage>
        <taxon>Bacteria</taxon>
        <taxon>Bacillati</taxon>
        <taxon>Bacillota</taxon>
        <taxon>Clostridia</taxon>
        <taxon>Thermoanaerobacterales</taxon>
        <taxon>Thermoanaerobacteraceae</taxon>
        <taxon>Thermoanaerobacter</taxon>
    </lineage>
</organism>
<protein>
    <recommendedName>
        <fullName evidence="1">Adenosylcobinamide-GDP ribazoletransferase</fullName>
        <ecNumber evidence="1">2.7.8.26</ecNumber>
    </recommendedName>
    <alternativeName>
        <fullName evidence="1">Cobalamin synthase</fullName>
    </alternativeName>
    <alternativeName>
        <fullName evidence="1">Cobalamin-5'-phosphate synthase</fullName>
    </alternativeName>
</protein>
<proteinExistence type="inferred from homology"/>
<accession>B0K2K2</accession>
<name>COBS_THEPX</name>
<gene>
    <name evidence="1" type="primary">cobS</name>
    <name type="ordered locus">Teth514_0306</name>
</gene>
<reference key="1">
    <citation type="submission" date="2008-01" db="EMBL/GenBank/DDBJ databases">
        <title>Complete sequence of Thermoanaerobacter sp. X514.</title>
        <authorList>
            <consortium name="US DOE Joint Genome Institute"/>
            <person name="Copeland A."/>
            <person name="Lucas S."/>
            <person name="Lapidus A."/>
            <person name="Barry K."/>
            <person name="Glavina del Rio T."/>
            <person name="Dalin E."/>
            <person name="Tice H."/>
            <person name="Pitluck S."/>
            <person name="Bruce D."/>
            <person name="Goodwin L."/>
            <person name="Saunders E."/>
            <person name="Brettin T."/>
            <person name="Detter J.C."/>
            <person name="Han C."/>
            <person name="Schmutz J."/>
            <person name="Larimer F."/>
            <person name="Land M."/>
            <person name="Hauser L."/>
            <person name="Kyrpides N."/>
            <person name="Kim E."/>
            <person name="Hemme C."/>
            <person name="Fields M.W."/>
            <person name="He Z."/>
            <person name="Zhou J."/>
            <person name="Richardson P."/>
        </authorList>
    </citation>
    <scope>NUCLEOTIDE SEQUENCE [LARGE SCALE GENOMIC DNA]</scope>
    <source>
        <strain>X514</strain>
    </source>
</reference>
<keyword id="KW-1003">Cell membrane</keyword>
<keyword id="KW-0169">Cobalamin biosynthesis</keyword>
<keyword id="KW-0460">Magnesium</keyword>
<keyword id="KW-0472">Membrane</keyword>
<keyword id="KW-0808">Transferase</keyword>
<keyword id="KW-0812">Transmembrane</keyword>
<keyword id="KW-1133">Transmembrane helix</keyword>
<dbReference type="EC" id="2.7.8.26" evidence="1"/>
<dbReference type="EMBL" id="CP000923">
    <property type="protein sequence ID" value="ABY91622.1"/>
    <property type="molecule type" value="Genomic_DNA"/>
</dbReference>
<dbReference type="RefSeq" id="WP_009051847.1">
    <property type="nucleotide sequence ID" value="NC_010320.1"/>
</dbReference>
<dbReference type="KEGG" id="tex:Teth514_0306"/>
<dbReference type="HOGENOM" id="CLU_057426_1_2_9"/>
<dbReference type="UniPathway" id="UPA00148">
    <property type="reaction ID" value="UER00238"/>
</dbReference>
<dbReference type="Proteomes" id="UP000002155">
    <property type="component" value="Chromosome"/>
</dbReference>
<dbReference type="GO" id="GO:0005886">
    <property type="term" value="C:plasma membrane"/>
    <property type="evidence" value="ECO:0007669"/>
    <property type="project" value="UniProtKB-SubCell"/>
</dbReference>
<dbReference type="GO" id="GO:0051073">
    <property type="term" value="F:adenosylcobinamide-GDP ribazoletransferase activity"/>
    <property type="evidence" value="ECO:0007669"/>
    <property type="project" value="UniProtKB-UniRule"/>
</dbReference>
<dbReference type="GO" id="GO:0008818">
    <property type="term" value="F:cobalamin 5'-phosphate synthase activity"/>
    <property type="evidence" value="ECO:0007669"/>
    <property type="project" value="UniProtKB-UniRule"/>
</dbReference>
<dbReference type="GO" id="GO:0009236">
    <property type="term" value="P:cobalamin biosynthetic process"/>
    <property type="evidence" value="ECO:0007669"/>
    <property type="project" value="UniProtKB-UniRule"/>
</dbReference>
<dbReference type="HAMAP" id="MF_00719">
    <property type="entry name" value="CobS"/>
    <property type="match status" value="1"/>
</dbReference>
<dbReference type="InterPro" id="IPR003805">
    <property type="entry name" value="CobS"/>
</dbReference>
<dbReference type="NCBIfam" id="TIGR00317">
    <property type="entry name" value="cobS"/>
    <property type="match status" value="1"/>
</dbReference>
<dbReference type="PANTHER" id="PTHR34148">
    <property type="entry name" value="ADENOSYLCOBINAMIDE-GDP RIBAZOLETRANSFERASE"/>
    <property type="match status" value="1"/>
</dbReference>
<dbReference type="PANTHER" id="PTHR34148:SF1">
    <property type="entry name" value="ADENOSYLCOBINAMIDE-GDP RIBAZOLETRANSFERASE"/>
    <property type="match status" value="1"/>
</dbReference>
<dbReference type="Pfam" id="PF02654">
    <property type="entry name" value="CobS"/>
    <property type="match status" value="1"/>
</dbReference>
<evidence type="ECO:0000255" key="1">
    <source>
        <dbReference type="HAMAP-Rule" id="MF_00719"/>
    </source>
</evidence>
<comment type="function">
    <text evidence="1">Joins adenosylcobinamide-GDP and alpha-ribazole to generate adenosylcobalamin (Ado-cobalamin). Also synthesizes adenosylcobalamin 5'-phosphate from adenosylcobinamide-GDP and alpha-ribazole 5'-phosphate.</text>
</comment>
<comment type="catalytic activity">
    <reaction evidence="1">
        <text>alpha-ribazole + adenosylcob(III)inamide-GDP = adenosylcob(III)alamin + GMP + H(+)</text>
        <dbReference type="Rhea" id="RHEA:16049"/>
        <dbReference type="ChEBI" id="CHEBI:10329"/>
        <dbReference type="ChEBI" id="CHEBI:15378"/>
        <dbReference type="ChEBI" id="CHEBI:18408"/>
        <dbReference type="ChEBI" id="CHEBI:58115"/>
        <dbReference type="ChEBI" id="CHEBI:60487"/>
        <dbReference type="EC" id="2.7.8.26"/>
    </reaction>
</comment>
<comment type="catalytic activity">
    <reaction evidence="1">
        <text>alpha-ribazole 5'-phosphate + adenosylcob(III)inamide-GDP = adenosylcob(III)alamin 5'-phosphate + GMP + H(+)</text>
        <dbReference type="Rhea" id="RHEA:23560"/>
        <dbReference type="ChEBI" id="CHEBI:15378"/>
        <dbReference type="ChEBI" id="CHEBI:57918"/>
        <dbReference type="ChEBI" id="CHEBI:58115"/>
        <dbReference type="ChEBI" id="CHEBI:60487"/>
        <dbReference type="ChEBI" id="CHEBI:60493"/>
        <dbReference type="EC" id="2.7.8.26"/>
    </reaction>
</comment>
<comment type="cofactor">
    <cofactor evidence="1">
        <name>Mg(2+)</name>
        <dbReference type="ChEBI" id="CHEBI:18420"/>
    </cofactor>
</comment>
<comment type="pathway">
    <text evidence="1">Cofactor biosynthesis; adenosylcobalamin biosynthesis; adenosylcobalamin from cob(II)yrinate a,c-diamide: step 7/7.</text>
</comment>
<comment type="subcellular location">
    <subcellularLocation>
        <location evidence="1">Cell membrane</location>
        <topology evidence="1">Multi-pass membrane protein</topology>
    </subcellularLocation>
</comment>
<comment type="similarity">
    <text evidence="1">Belongs to the CobS family.</text>
</comment>